<comment type="function">
    <text evidence="1">One of the primary rRNA binding proteins, it binds directly to 16S rRNA central domain where it helps coordinate assembly of the platform of the 30S subunit.</text>
</comment>
<comment type="subunit">
    <text evidence="1">Part of the 30S ribosomal subunit. Contacts proteins S5 and S12.</text>
</comment>
<comment type="similarity">
    <text evidence="1">Belongs to the universal ribosomal protein uS8 family.</text>
</comment>
<gene>
    <name evidence="1" type="primary">rpsH</name>
    <name type="ordered locus">CGSHiGG_07460</name>
</gene>
<protein>
    <recommendedName>
        <fullName evidence="1">Small ribosomal subunit protein uS8</fullName>
    </recommendedName>
    <alternativeName>
        <fullName evidence="2">30S ribosomal protein S8</fullName>
    </alternativeName>
</protein>
<accession>A5UHU5</accession>
<proteinExistence type="inferred from homology"/>
<sequence length="130" mass="13986">MSMQDPIADMLTRIRNGQAANKVAINMPSSKLKVAIANVLAAEGYIESVKVLEGAKPELEITLKYFQGKPVVESIQRVSRPGLRIYKRKDELPKVMGGLGVAVISTSKGVMTDRAARQAGLGGEIICYVA</sequence>
<dbReference type="EMBL" id="CP000672">
    <property type="protein sequence ID" value="ABR00351.1"/>
    <property type="molecule type" value="Genomic_DNA"/>
</dbReference>
<dbReference type="SMR" id="A5UHU5"/>
<dbReference type="KEGG" id="hiq:CGSHiGG_07460"/>
<dbReference type="HOGENOM" id="CLU_098428_0_0_6"/>
<dbReference type="Proteomes" id="UP000001990">
    <property type="component" value="Chromosome"/>
</dbReference>
<dbReference type="GO" id="GO:1990904">
    <property type="term" value="C:ribonucleoprotein complex"/>
    <property type="evidence" value="ECO:0007669"/>
    <property type="project" value="UniProtKB-KW"/>
</dbReference>
<dbReference type="GO" id="GO:0005840">
    <property type="term" value="C:ribosome"/>
    <property type="evidence" value="ECO:0007669"/>
    <property type="project" value="UniProtKB-KW"/>
</dbReference>
<dbReference type="GO" id="GO:0019843">
    <property type="term" value="F:rRNA binding"/>
    <property type="evidence" value="ECO:0007669"/>
    <property type="project" value="UniProtKB-UniRule"/>
</dbReference>
<dbReference type="GO" id="GO:0003735">
    <property type="term" value="F:structural constituent of ribosome"/>
    <property type="evidence" value="ECO:0007669"/>
    <property type="project" value="InterPro"/>
</dbReference>
<dbReference type="GO" id="GO:0006412">
    <property type="term" value="P:translation"/>
    <property type="evidence" value="ECO:0007669"/>
    <property type="project" value="UniProtKB-UniRule"/>
</dbReference>
<dbReference type="FunFam" id="3.30.1370.30:FF:000003">
    <property type="entry name" value="30S ribosomal protein S8"/>
    <property type="match status" value="1"/>
</dbReference>
<dbReference type="FunFam" id="3.30.1490.10:FF:000001">
    <property type="entry name" value="30S ribosomal protein S8"/>
    <property type="match status" value="1"/>
</dbReference>
<dbReference type="Gene3D" id="3.30.1370.30">
    <property type="match status" value="1"/>
</dbReference>
<dbReference type="Gene3D" id="3.30.1490.10">
    <property type="match status" value="1"/>
</dbReference>
<dbReference type="HAMAP" id="MF_01302_B">
    <property type="entry name" value="Ribosomal_uS8_B"/>
    <property type="match status" value="1"/>
</dbReference>
<dbReference type="InterPro" id="IPR000630">
    <property type="entry name" value="Ribosomal_uS8"/>
</dbReference>
<dbReference type="InterPro" id="IPR047863">
    <property type="entry name" value="Ribosomal_uS8_CS"/>
</dbReference>
<dbReference type="InterPro" id="IPR035987">
    <property type="entry name" value="Ribosomal_uS8_sf"/>
</dbReference>
<dbReference type="NCBIfam" id="NF001109">
    <property type="entry name" value="PRK00136.1"/>
    <property type="match status" value="1"/>
</dbReference>
<dbReference type="PANTHER" id="PTHR11758">
    <property type="entry name" value="40S RIBOSOMAL PROTEIN S15A"/>
    <property type="match status" value="1"/>
</dbReference>
<dbReference type="Pfam" id="PF00410">
    <property type="entry name" value="Ribosomal_S8"/>
    <property type="match status" value="1"/>
</dbReference>
<dbReference type="SUPFAM" id="SSF56047">
    <property type="entry name" value="Ribosomal protein S8"/>
    <property type="match status" value="1"/>
</dbReference>
<dbReference type="PROSITE" id="PS00053">
    <property type="entry name" value="RIBOSOMAL_S8"/>
    <property type="match status" value="1"/>
</dbReference>
<evidence type="ECO:0000255" key="1">
    <source>
        <dbReference type="HAMAP-Rule" id="MF_01302"/>
    </source>
</evidence>
<evidence type="ECO:0000305" key="2"/>
<organism>
    <name type="scientific">Haemophilus influenzae (strain PittGG)</name>
    <dbReference type="NCBI Taxonomy" id="374931"/>
    <lineage>
        <taxon>Bacteria</taxon>
        <taxon>Pseudomonadati</taxon>
        <taxon>Pseudomonadota</taxon>
        <taxon>Gammaproteobacteria</taxon>
        <taxon>Pasteurellales</taxon>
        <taxon>Pasteurellaceae</taxon>
        <taxon>Haemophilus</taxon>
    </lineage>
</organism>
<name>RS8_HAEIG</name>
<reference key="1">
    <citation type="journal article" date="2007" name="Genome Biol.">
        <title>Characterization and modeling of the Haemophilus influenzae core and supragenomes based on the complete genomic sequences of Rd and 12 clinical nontypeable strains.</title>
        <authorList>
            <person name="Hogg J.S."/>
            <person name="Hu F.Z."/>
            <person name="Janto B."/>
            <person name="Boissy R."/>
            <person name="Hayes J."/>
            <person name="Keefe R."/>
            <person name="Post J.C."/>
            <person name="Ehrlich G.D."/>
        </authorList>
    </citation>
    <scope>NUCLEOTIDE SEQUENCE [LARGE SCALE GENOMIC DNA]</scope>
    <source>
        <strain>PittGG</strain>
    </source>
</reference>
<feature type="chain" id="PRO_0000305746" description="Small ribosomal subunit protein uS8">
    <location>
        <begin position="1"/>
        <end position="130"/>
    </location>
</feature>
<keyword id="KW-0687">Ribonucleoprotein</keyword>
<keyword id="KW-0689">Ribosomal protein</keyword>
<keyword id="KW-0694">RNA-binding</keyword>
<keyword id="KW-0699">rRNA-binding</keyword>